<sequence length="489" mass="55791">MTSRLALFDQTLSASLLQRVNSDPHDYKAYKTRVKLKILEQRGEHGEKELKFEISRADDFEFLFAAILNNEKYQELAKAHELTVDFDTFPKVIIQHLLCKNIVKTADEDGIEVDARAKPGYHSIIENRGVPPTEINIKLEKDKNSCEFEIFSKTPISKGKIFAMSLQAVRGDLLIAHLLKICSSQSTKIATLHRSTDELAALKTKVAEMEKRNQSIEDLEKKIEEQEERIREMEDELELVKEERENIRVIAEEKEDLVAELQNDLESVNRELEENQEELEIVGKMLGEEQGKVDQLQKRNVAHQKELATLQRNFQKVESQLKRSSVEQSQQSLDIRKLRELEADLKEKDSMVENLTQTVGILKKELEDERVKMQETMTSFESLKVENESVKERLAMYRNQRFSPAPVGLQTTTIPSAGVGFKTVLGQNSPYANNPNMRTPFRDTSSALNTGLTYQNSITPLPNTTRFLMADDTTGSSVTNTPPVLRNPL</sequence>
<gene>
    <name type="primary">sas-6</name>
    <name type="ORF">CBG22377</name>
</gene>
<name>SAS6_CAEBR</name>
<organism>
    <name type="scientific">Caenorhabditis briggsae</name>
    <dbReference type="NCBI Taxonomy" id="6238"/>
    <lineage>
        <taxon>Eukaryota</taxon>
        <taxon>Metazoa</taxon>
        <taxon>Ecdysozoa</taxon>
        <taxon>Nematoda</taxon>
        <taxon>Chromadorea</taxon>
        <taxon>Rhabditida</taxon>
        <taxon>Rhabditina</taxon>
        <taxon>Rhabditomorpha</taxon>
        <taxon>Rhabditoidea</taxon>
        <taxon>Rhabditidae</taxon>
        <taxon>Peloderinae</taxon>
        <taxon>Caenorhabditis</taxon>
    </lineage>
</organism>
<keyword id="KW-0131">Cell cycle</keyword>
<keyword id="KW-0175">Coiled coil</keyword>
<keyword id="KW-0963">Cytoplasm</keyword>
<keyword id="KW-0206">Cytoskeleton</keyword>
<keyword id="KW-0217">Developmental protein</keyword>
<keyword id="KW-1185">Reference proteome</keyword>
<feature type="chain" id="PRO_0000189977" description="Spindle assembly abnormal protein 6">
    <location>
        <begin position="1"/>
        <end position="489"/>
    </location>
</feature>
<feature type="domain" description="PISA">
    <location>
        <begin position="45"/>
        <end position="97"/>
    </location>
</feature>
<feature type="region of interest" description="Disordered" evidence="3">
    <location>
        <begin position="470"/>
        <end position="489"/>
    </location>
</feature>
<feature type="coiled-coil region" evidence="2">
    <location>
        <begin position="187"/>
        <end position="409"/>
    </location>
</feature>
<feature type="compositionally biased region" description="Polar residues" evidence="3">
    <location>
        <begin position="473"/>
        <end position="482"/>
    </location>
</feature>
<evidence type="ECO:0000250" key="1"/>
<evidence type="ECO:0000255" key="2"/>
<evidence type="ECO:0000256" key="3">
    <source>
        <dbReference type="SAM" id="MobiDB-lite"/>
    </source>
</evidence>
<dbReference type="EMBL" id="HE600912">
    <property type="protein sequence ID" value="CAP38980.3"/>
    <property type="molecule type" value="Genomic_DNA"/>
</dbReference>
<dbReference type="SMR" id="Q60P76"/>
<dbReference type="FunCoup" id="Q60P76">
    <property type="interactions" value="1422"/>
</dbReference>
<dbReference type="STRING" id="6238.Q60P76"/>
<dbReference type="EnsemblMetazoa" id="CBG22377.1">
    <property type="protein sequence ID" value="CBG22377.1"/>
    <property type="gene ID" value="WBGene00040950"/>
</dbReference>
<dbReference type="WormBase" id="CBG22377">
    <property type="protein sequence ID" value="CBP37617"/>
    <property type="gene ID" value="WBGene00040950"/>
    <property type="gene designation" value="Cbr-sas-6"/>
</dbReference>
<dbReference type="eggNOG" id="ENOG502THXX">
    <property type="taxonomic scope" value="Eukaryota"/>
</dbReference>
<dbReference type="HOGENOM" id="CLU_565286_0_0_1"/>
<dbReference type="InParanoid" id="Q60P76"/>
<dbReference type="OMA" id="GKMGFKW"/>
<dbReference type="Proteomes" id="UP000008549">
    <property type="component" value="Unassembled WGS sequence"/>
</dbReference>
<dbReference type="GO" id="GO:0005814">
    <property type="term" value="C:centriole"/>
    <property type="evidence" value="ECO:0000318"/>
    <property type="project" value="GO_Central"/>
</dbReference>
<dbReference type="GO" id="GO:0005813">
    <property type="term" value="C:centrosome"/>
    <property type="evidence" value="ECO:0000318"/>
    <property type="project" value="GO_Central"/>
</dbReference>
<dbReference type="GO" id="GO:0005737">
    <property type="term" value="C:cytoplasm"/>
    <property type="evidence" value="ECO:0007669"/>
    <property type="project" value="UniProtKB-SubCell"/>
</dbReference>
<dbReference type="GO" id="GO:0042802">
    <property type="term" value="F:identical protein binding"/>
    <property type="evidence" value="ECO:0007669"/>
    <property type="project" value="EnsemblMetazoa"/>
</dbReference>
<dbReference type="GO" id="GO:0019904">
    <property type="term" value="F:protein domain specific binding"/>
    <property type="evidence" value="ECO:0007669"/>
    <property type="project" value="EnsemblMetazoa"/>
</dbReference>
<dbReference type="GO" id="GO:0007099">
    <property type="term" value="P:centriole replication"/>
    <property type="evidence" value="ECO:0000318"/>
    <property type="project" value="GO_Central"/>
</dbReference>
<dbReference type="GO" id="GO:0008104">
    <property type="term" value="P:protein localization"/>
    <property type="evidence" value="ECO:0007669"/>
    <property type="project" value="EnsemblMetazoa"/>
</dbReference>
<dbReference type="GO" id="GO:0051726">
    <property type="term" value="P:regulation of cell cycle"/>
    <property type="evidence" value="ECO:0007669"/>
    <property type="project" value="EnsemblMetazoa"/>
</dbReference>
<dbReference type="Gene3D" id="6.10.140.2140">
    <property type="match status" value="1"/>
</dbReference>
<dbReference type="Gene3D" id="2.170.210.20">
    <property type="entry name" value="Spindle assembly abnormal protein 6, N-terminal domain"/>
    <property type="match status" value="1"/>
</dbReference>
<dbReference type="InterPro" id="IPR048600">
    <property type="entry name" value="Sas-6_helical"/>
</dbReference>
<dbReference type="InterPro" id="IPR032396">
    <property type="entry name" value="SAS-6_N"/>
</dbReference>
<dbReference type="InterPro" id="IPR038558">
    <property type="entry name" value="SAS-6_N_sf"/>
</dbReference>
<dbReference type="PANTHER" id="PTHR44281">
    <property type="entry name" value="SPINDLE ASSEMBLY ABNORMAL PROTEIN 6 HOMOLOG"/>
    <property type="match status" value="1"/>
</dbReference>
<dbReference type="PANTHER" id="PTHR44281:SF2">
    <property type="entry name" value="SPINDLE ASSEMBLY ABNORMAL PROTEIN 6 HOMOLOG"/>
    <property type="match status" value="1"/>
</dbReference>
<dbReference type="Pfam" id="PF21503">
    <property type="entry name" value="Sas-6_helical"/>
    <property type="match status" value="1"/>
</dbReference>
<dbReference type="Pfam" id="PF16531">
    <property type="entry name" value="SAS-6_N"/>
    <property type="match status" value="1"/>
</dbReference>
<reference key="1">
    <citation type="journal article" date="2003" name="PLoS Biol.">
        <title>The genome sequence of Caenorhabditis briggsae: a platform for comparative genomics.</title>
        <authorList>
            <person name="Stein L.D."/>
            <person name="Bao Z."/>
            <person name="Blasiar D."/>
            <person name="Blumenthal T."/>
            <person name="Brent M.R."/>
            <person name="Chen N."/>
            <person name="Chinwalla A."/>
            <person name="Clarke L."/>
            <person name="Clee C."/>
            <person name="Coghlan A."/>
            <person name="Coulson A."/>
            <person name="D'Eustachio P."/>
            <person name="Fitch D.H.A."/>
            <person name="Fulton L.A."/>
            <person name="Fulton R.E."/>
            <person name="Griffiths-Jones S."/>
            <person name="Harris T.W."/>
            <person name="Hillier L.W."/>
            <person name="Kamath R."/>
            <person name="Kuwabara P.E."/>
            <person name="Mardis E.R."/>
            <person name="Marra M.A."/>
            <person name="Miner T.L."/>
            <person name="Minx P."/>
            <person name="Mullikin J.C."/>
            <person name="Plumb R.W."/>
            <person name="Rogers J."/>
            <person name="Schein J.E."/>
            <person name="Sohrmann M."/>
            <person name="Spieth J."/>
            <person name="Stajich J.E."/>
            <person name="Wei C."/>
            <person name="Willey D."/>
            <person name="Wilson R.K."/>
            <person name="Durbin R.M."/>
            <person name="Waterston R.H."/>
        </authorList>
    </citation>
    <scope>NUCLEOTIDE SEQUENCE [LARGE SCALE GENOMIC DNA]</scope>
    <source>
        <strain>AF16</strain>
    </source>
</reference>
<proteinExistence type="inferred from homology"/>
<protein>
    <recommendedName>
        <fullName>Spindle assembly abnormal protein 6</fullName>
    </recommendedName>
</protein>
<comment type="function">
    <text evidence="1">Central scaffolding component of the centrioles ensuring their 9-fold symmetry. Required for centrosome biogenesis and duplication (By similarity).</text>
</comment>
<comment type="subunit">
    <text evidence="1">Nine homodimers form a cartwheel structure with an internal diameter of 23 nM and radial spokes connecting to the microtubule triplets. Interacts with sas-5 (By similarity).</text>
</comment>
<comment type="subcellular location">
    <subcellularLocation>
        <location evidence="1">Cytoplasm</location>
    </subcellularLocation>
    <subcellularLocation>
        <location evidence="1">Cytoplasm</location>
        <location evidence="1">Cytoskeleton</location>
        <location evidence="1">Microtubule organizing center</location>
        <location evidence="1">Centrosome</location>
        <location evidence="1">Centriole</location>
    </subcellularLocation>
    <text evidence="1">Localizes to centrioles.</text>
</comment>
<comment type="domain">
    <text evidence="1">The coiled coil domain is necessary and sufficient for interaction with sas-5.</text>
</comment>
<comment type="domain">
    <text evidence="1">The 35 nM long coiled-coil domain mediates homodimerization while the globular N-terminus links the dimers at an angle of 40 degrees to form the inner ring.</text>
</comment>
<accession>Q60P76</accession>
<accession>A8Y240</accession>